<evidence type="ECO:0000255" key="1"/>
<evidence type="ECO:0000256" key="2">
    <source>
        <dbReference type="SAM" id="MobiDB-lite"/>
    </source>
</evidence>
<evidence type="ECO:0000312" key="3">
    <source>
        <dbReference type="EMBL" id="AAO01126.1"/>
    </source>
</evidence>
<proteinExistence type="inferred from homology"/>
<accession>Q8I145</accession>
<reference evidence="3" key="1">
    <citation type="journal article" date="2002" name="Genome Biol.">
        <title>Assessing the impact of comparative genomic sequence data on the functional annotation of the Drosophila genome.</title>
        <authorList>
            <person name="Bergman C.M."/>
            <person name="Pfeiffer B.D."/>
            <person name="Rincon-Limas D.E."/>
            <person name="Hoskins R.A."/>
            <person name="Gnirke A."/>
            <person name="Mungall C.J."/>
            <person name="Wang A.M."/>
            <person name="Kronmiller B."/>
            <person name="Pacleb J.M."/>
            <person name="Park S."/>
            <person name="Stapleton M."/>
            <person name="Wan K.H."/>
            <person name="George R.A."/>
            <person name="de Jong P.J."/>
            <person name="Botas J."/>
            <person name="Rubin G.M."/>
            <person name="Celniker S.E."/>
        </authorList>
    </citation>
    <scope>NUCLEOTIDE SEQUENCE [GENOMIC DNA]</scope>
    <source>
        <strain evidence="3">Tucson 14030-0814.10</strain>
    </source>
</reference>
<organism>
    <name type="scientific">Drosophila willistoni</name>
    <name type="common">Fruit fly</name>
    <dbReference type="NCBI Taxonomy" id="7260"/>
    <lineage>
        <taxon>Eukaryota</taxon>
        <taxon>Metazoa</taxon>
        <taxon>Ecdysozoa</taxon>
        <taxon>Arthropoda</taxon>
        <taxon>Hexapoda</taxon>
        <taxon>Insecta</taxon>
        <taxon>Pterygota</taxon>
        <taxon>Neoptera</taxon>
        <taxon>Endopterygota</taxon>
        <taxon>Diptera</taxon>
        <taxon>Brachycera</taxon>
        <taxon>Muscomorpha</taxon>
        <taxon>Ephydroidea</taxon>
        <taxon>Drosophilidae</taxon>
        <taxon>Drosophila</taxon>
        <taxon>Sophophora</taxon>
    </lineage>
</organism>
<protein>
    <recommendedName>
        <fullName>Coiled-coil domain-containing protein 22 homolog</fullName>
    </recommendedName>
</protein>
<sequence>MDEVDKIIMHQLHQIDASIEPTEELANFTPALVVRAVASCLQEISQSLKDLPRSLPMAMAQRFNVATILAERCQESGYRGDIGYQTFLYPNPVELRRLLMFLIEQLPRERQSEDDANRTSHPLSSREQLERQIRQKLKAQLKMPWVPQFCRMVANRKSLGCNSQCISFEPQLNLNVPSANPEDRSKEVQQYFDQQAPNLFQQTSANCYDLIASVMHKNDLERWGDLPSMDPVTLTSTSDDLVGKALPTSPTQTSTTAEKAAQDNSSEATATSTTTTPLELLGQEVQELRTQTEIMLNHRKMVTSKLNELKIRETTASQEKETIESKLKSHEKLSLVLSEPEENVGKLEALVEATENKRQTLNQQWQDYRRPLLDTLSTLRNAQEAQQVQIIRNSIEKLEQEIIAKSQQHNELNSSLKNATQSVAPRQEYTRRIHEFIKNIRKQREDIFKVLDDTRQLQKQLNVVNAQLQRQFNYTDDLLFQSAKHDLHAKKAYKLLAQLHSNCSELVECVSLTGNVTKEIRDLEVQIDGEKLKNVLSRLQQITGDIQRSEQHIQELQTQIRQVENAITVG</sequence>
<feature type="chain" id="PRO_0000347258" description="Coiled-coil domain-containing protein 22 homolog">
    <location>
        <begin position="1"/>
        <end position="570"/>
    </location>
</feature>
<feature type="region of interest" description="Disordered" evidence="2">
    <location>
        <begin position="110"/>
        <end position="129"/>
    </location>
</feature>
<feature type="region of interest" description="Disordered" evidence="2">
    <location>
        <begin position="234"/>
        <end position="280"/>
    </location>
</feature>
<feature type="coiled-coil region" evidence="1">
    <location>
        <begin position="308"/>
        <end position="471"/>
    </location>
</feature>
<feature type="coiled-coil region" evidence="1">
    <location>
        <begin position="529"/>
        <end position="570"/>
    </location>
</feature>
<feature type="compositionally biased region" description="Polar residues" evidence="2">
    <location>
        <begin position="248"/>
        <end position="257"/>
    </location>
</feature>
<feature type="compositionally biased region" description="Low complexity" evidence="2">
    <location>
        <begin position="265"/>
        <end position="276"/>
    </location>
</feature>
<dbReference type="EMBL" id="AY190961">
    <property type="protein sequence ID" value="AAO01126.1"/>
    <property type="molecule type" value="Genomic_DNA"/>
</dbReference>
<dbReference type="SMR" id="Q8I145"/>
<dbReference type="eggNOG" id="KOG1937">
    <property type="taxonomic scope" value="Eukaryota"/>
</dbReference>
<dbReference type="GO" id="GO:0097602">
    <property type="term" value="F:cullin family protein binding"/>
    <property type="evidence" value="ECO:0007669"/>
    <property type="project" value="TreeGrafter"/>
</dbReference>
<dbReference type="GO" id="GO:2000060">
    <property type="term" value="P:positive regulation of ubiquitin-dependent protein catabolic process"/>
    <property type="evidence" value="ECO:0007669"/>
    <property type="project" value="TreeGrafter"/>
</dbReference>
<dbReference type="InterPro" id="IPR008530">
    <property type="entry name" value="CCDC22"/>
</dbReference>
<dbReference type="InterPro" id="IPR048348">
    <property type="entry name" value="CCDC22_CC"/>
</dbReference>
<dbReference type="InterPro" id="IPR048349">
    <property type="entry name" value="CCDC22_N"/>
</dbReference>
<dbReference type="PANTHER" id="PTHR15668:SF4">
    <property type="entry name" value="COILED-COIL DOMAIN-CONTAINING PROTEIN 22"/>
    <property type="match status" value="1"/>
</dbReference>
<dbReference type="PANTHER" id="PTHR15668">
    <property type="entry name" value="JM1 PROTEIN"/>
    <property type="match status" value="1"/>
</dbReference>
<dbReference type="Pfam" id="PF05667">
    <property type="entry name" value="CCDC22_CC"/>
    <property type="match status" value="1"/>
</dbReference>
<dbReference type="Pfam" id="PF21674">
    <property type="entry name" value="CCDC22_N"/>
    <property type="match status" value="1"/>
</dbReference>
<gene>
    <name type="ORF">GK20894</name>
</gene>
<keyword id="KW-0175">Coiled coil</keyword>
<comment type="similarity">
    <text evidence="1">Belongs to the CCDC22 family.</text>
</comment>
<name>CCD22_DROWI</name>